<organism>
    <name type="scientific">Chlorocebus aethiops</name>
    <name type="common">Green monkey</name>
    <name type="synonym">Cercopithecus aethiops</name>
    <dbReference type="NCBI Taxonomy" id="9534"/>
    <lineage>
        <taxon>Eukaryota</taxon>
        <taxon>Metazoa</taxon>
        <taxon>Chordata</taxon>
        <taxon>Craniata</taxon>
        <taxon>Vertebrata</taxon>
        <taxon>Euteleostomi</taxon>
        <taxon>Mammalia</taxon>
        <taxon>Eutheria</taxon>
        <taxon>Euarchontoglires</taxon>
        <taxon>Primates</taxon>
        <taxon>Haplorrhini</taxon>
        <taxon>Catarrhini</taxon>
        <taxon>Cercopithecidae</taxon>
        <taxon>Cercopithecinae</taxon>
        <taxon>Chlorocebus</taxon>
    </lineage>
</organism>
<accession>Q9GKL8</accession>
<keyword id="KW-1003">Cell membrane</keyword>
<keyword id="KW-0968">Cytoplasmic vesicle</keyword>
<keyword id="KW-1015">Disulfide bond</keyword>
<keyword id="KW-0378">Hydrolase</keyword>
<keyword id="KW-0458">Lysosome</keyword>
<keyword id="KW-0472">Membrane</keyword>
<keyword id="KW-0479">Metal-binding</keyword>
<keyword id="KW-0645">Protease</keyword>
<keyword id="KW-0964">Secreted</keyword>
<keyword id="KW-0732">Signal</keyword>
<keyword id="KW-0788">Thiol protease</keyword>
<keyword id="KW-0862">Zinc</keyword>
<keyword id="KW-0865">Zymogen</keyword>
<dbReference type="EC" id="3.4.22.15"/>
<dbReference type="EMBL" id="AF201700">
    <property type="protein sequence ID" value="AAG35605.1"/>
    <property type="molecule type" value="mRNA"/>
</dbReference>
<dbReference type="SMR" id="Q9GKL8"/>
<dbReference type="MEROPS" id="C01.032"/>
<dbReference type="GO" id="GO:0016324">
    <property type="term" value="C:apical plasma membrane"/>
    <property type="evidence" value="ECO:0007669"/>
    <property type="project" value="UniProtKB-SubCell"/>
</dbReference>
<dbReference type="GO" id="GO:0042583">
    <property type="term" value="C:chromaffin granule"/>
    <property type="evidence" value="ECO:0000250"/>
    <property type="project" value="UniProtKB"/>
</dbReference>
<dbReference type="GO" id="GO:0005615">
    <property type="term" value="C:extracellular space"/>
    <property type="evidence" value="ECO:0000250"/>
    <property type="project" value="UniProtKB"/>
</dbReference>
<dbReference type="GO" id="GO:0005764">
    <property type="term" value="C:lysosome"/>
    <property type="evidence" value="ECO:0000250"/>
    <property type="project" value="UniProtKB"/>
</dbReference>
<dbReference type="GO" id="GO:0004197">
    <property type="term" value="F:cysteine-type endopeptidase activity"/>
    <property type="evidence" value="ECO:0000314"/>
    <property type="project" value="CACAO"/>
</dbReference>
<dbReference type="GO" id="GO:0046872">
    <property type="term" value="F:metal ion binding"/>
    <property type="evidence" value="ECO:0007669"/>
    <property type="project" value="UniProtKB-KW"/>
</dbReference>
<dbReference type="GO" id="GO:0048002">
    <property type="term" value="P:antigen processing and presentation of peptide antigen"/>
    <property type="evidence" value="ECO:0000250"/>
    <property type="project" value="UniProtKB"/>
</dbReference>
<dbReference type="GO" id="GO:0043373">
    <property type="term" value="P:CD4-positive, alpha-beta T cell lineage commitment"/>
    <property type="evidence" value="ECO:0000250"/>
    <property type="project" value="UniProtKB"/>
</dbReference>
<dbReference type="GO" id="GO:0030574">
    <property type="term" value="P:collagen catabolic process"/>
    <property type="evidence" value="ECO:0000250"/>
    <property type="project" value="UniProtKB"/>
</dbReference>
<dbReference type="GO" id="GO:0060309">
    <property type="term" value="P:elastin catabolic process"/>
    <property type="evidence" value="ECO:0000250"/>
    <property type="project" value="UniProtKB"/>
</dbReference>
<dbReference type="GO" id="GO:0034230">
    <property type="term" value="P:enkephalin processing"/>
    <property type="evidence" value="ECO:0000250"/>
    <property type="project" value="UniProtKB"/>
</dbReference>
<dbReference type="GO" id="GO:0016540">
    <property type="term" value="P:protein autoprocessing"/>
    <property type="evidence" value="ECO:0000250"/>
    <property type="project" value="UniProtKB"/>
</dbReference>
<dbReference type="GO" id="GO:0046718">
    <property type="term" value="P:symbiont entry into host cell"/>
    <property type="evidence" value="ECO:0000314"/>
    <property type="project" value="CACAO"/>
</dbReference>
<dbReference type="GO" id="GO:0031638">
    <property type="term" value="P:zymogen activation"/>
    <property type="evidence" value="ECO:0000250"/>
    <property type="project" value="UniProtKB"/>
</dbReference>
<dbReference type="CDD" id="cd02248">
    <property type="entry name" value="Peptidase_C1A"/>
    <property type="match status" value="1"/>
</dbReference>
<dbReference type="FunFam" id="3.90.70.10:FF:000332">
    <property type="entry name" value="Cathepsin L1"/>
    <property type="match status" value="1"/>
</dbReference>
<dbReference type="Gene3D" id="3.90.70.10">
    <property type="entry name" value="Cysteine proteinases"/>
    <property type="match status" value="1"/>
</dbReference>
<dbReference type="InterPro" id="IPR038765">
    <property type="entry name" value="Papain-like_cys_pep_sf"/>
</dbReference>
<dbReference type="InterPro" id="IPR025661">
    <property type="entry name" value="Pept_asp_AS"/>
</dbReference>
<dbReference type="InterPro" id="IPR000169">
    <property type="entry name" value="Pept_cys_AS"/>
</dbReference>
<dbReference type="InterPro" id="IPR025660">
    <property type="entry name" value="Pept_his_AS"/>
</dbReference>
<dbReference type="InterPro" id="IPR013128">
    <property type="entry name" value="Peptidase_C1A"/>
</dbReference>
<dbReference type="InterPro" id="IPR000668">
    <property type="entry name" value="Peptidase_C1A_C"/>
</dbReference>
<dbReference type="InterPro" id="IPR039417">
    <property type="entry name" value="Peptidase_C1A_papain-like"/>
</dbReference>
<dbReference type="InterPro" id="IPR013201">
    <property type="entry name" value="Prot_inhib_I29"/>
</dbReference>
<dbReference type="PANTHER" id="PTHR12411">
    <property type="entry name" value="CYSTEINE PROTEASE FAMILY C1-RELATED"/>
    <property type="match status" value="1"/>
</dbReference>
<dbReference type="Pfam" id="PF08246">
    <property type="entry name" value="Inhibitor_I29"/>
    <property type="match status" value="1"/>
</dbReference>
<dbReference type="Pfam" id="PF00112">
    <property type="entry name" value="Peptidase_C1"/>
    <property type="match status" value="1"/>
</dbReference>
<dbReference type="PRINTS" id="PR00705">
    <property type="entry name" value="PAPAIN"/>
</dbReference>
<dbReference type="SMART" id="SM00848">
    <property type="entry name" value="Inhibitor_I29"/>
    <property type="match status" value="1"/>
</dbReference>
<dbReference type="SMART" id="SM00645">
    <property type="entry name" value="Pept_C1"/>
    <property type="match status" value="1"/>
</dbReference>
<dbReference type="SUPFAM" id="SSF54001">
    <property type="entry name" value="Cysteine proteinases"/>
    <property type="match status" value="1"/>
</dbReference>
<dbReference type="PROSITE" id="PS00640">
    <property type="entry name" value="THIOL_PROTEASE_ASN"/>
    <property type="match status" value="1"/>
</dbReference>
<dbReference type="PROSITE" id="PS00139">
    <property type="entry name" value="THIOL_PROTEASE_CYS"/>
    <property type="match status" value="1"/>
</dbReference>
<dbReference type="PROSITE" id="PS00639">
    <property type="entry name" value="THIOL_PROTEASE_HIS"/>
    <property type="match status" value="1"/>
</dbReference>
<comment type="function">
    <text evidence="2 3 4 5">Thiol protease important for the overall degradation of proteins in lysosomes (By similarity). Plays a critical for normal cellular functions such as general protein turnover, antigen processing and bone remodeling. Involved in the solubilization of cross-linked TG/thyroglobulin and in the subsequent release of thyroid hormone thyroxine (T4) by limited proteolysis of TG/thyroglobulin in the thyroid follicle lumen (By similarity). In neuroendocrine chromaffin cells secretory vesicles, catalyzes the prohormone proenkephalin processing to the active enkephalin peptide neurotransmitter (By similarity). In thymus, regulates CD4(+) T cell positive selection by generating the major histocompatibility complex class II (MHCII) bound peptide ligands presented by cortical thymic epithelial cells. Also mediates invariant chain processing in cortical thymic epithelial cells. Major elastin-degrading enzyme at neutral pH. Accumulates as a mature and active enzyme in the extracellular space of antigen presenting cells (APCs) to regulate degradation of the extracellular matrix in the course of inflammation (By similarity). Secreted form generates endostatin from COL18A1 (By similarity). Critical for cardiac morphology and function. Plays an important role in hair follicle morphogenesis and cycling, as well as epidermal differentiation (By similarity). Required for maximal stimulation of steroidogenesis by TIMP1 (By similarity).</text>
</comment>
<comment type="catalytic activity">
    <reaction evidence="4">
        <text>Specificity close to that of papain. As compared to cathepsin B, cathepsin L exhibits higher activity toward protein substrates, but has little activity on Z-Arg-Arg-NHMec, and no peptidyl-dipeptidase activity.</text>
        <dbReference type="EC" id="3.4.22.15"/>
    </reaction>
</comment>
<comment type="activity regulation">
    <text evidence="2 4">Inhibited by the propeptide produced by autocleavage (By similarity). Long isoform of CD74/Ii chain stabilizes the conformation of mature CTSL by binding to its active site and serving as a chaperone to help maintain a pool of mature enzyme in endocytic compartments and extracellular space of APCs. IFNG enhances the conversion into the CTSL mature and active form (By similarity). Inhibited by CST6. Inhibited by the glycopeptide antibiotic teicoplanin. Inhibited by amantadine (By similarity).</text>
</comment>
<comment type="subunit">
    <text evidence="2">Dimer of a heavy and a light chain linked by disulfide bonds. Interacts with Long isoform of CD74/Ii chain; the interaction stabilizes the conformation of mature CTSL.</text>
</comment>
<comment type="subcellular location">
    <subcellularLocation>
        <location evidence="2">Lysosome</location>
    </subcellularLocation>
    <subcellularLocation>
        <location evidence="2">Apical cell membrane</location>
        <topology evidence="2">Peripheral membrane protein</topology>
        <orientation evidence="2">Extracellular side</orientation>
    </subcellularLocation>
    <subcellularLocation>
        <location evidence="5">Cytoplasmic vesicle</location>
        <location evidence="5">Secretory vesicle</location>
        <location evidence="5">Chromaffin granule</location>
    </subcellularLocation>
    <subcellularLocation>
        <location evidence="2">Secreted</location>
        <location evidence="2">Extracellular space</location>
    </subcellularLocation>
    <subcellularLocation>
        <location evidence="2">Secreted</location>
    </subcellularLocation>
    <text evidence="2">Localizes to the apical membrane of thyroid epithelial cells. Released at extracellular space by activated dendritic cells and macrophages.</text>
</comment>
<comment type="PTM">
    <text evidence="2 4">During export along the endocytic pathway, pro-CTSL undergoes several proteolytic cleavages to generate the CTSL single-chain and two-chain mature forms, composed of a heavy chain linked to a light chain by disulfide bonds (By similarity). Autocleavage; produces the single-chain CTSL after cleavage of the propeptide. The cleavage can be intermolecular (By similarity).</text>
</comment>
<comment type="similarity">
    <text evidence="6 7 8">Belongs to the peptidase C1 family.</text>
</comment>
<proteinExistence type="evidence at transcript level"/>
<sequence length="333" mass="37430">MNPTFILAALCLGIASATLTFNHSLEAQWTKWKAMHNRLYGMNEEGWRRAVWEKNMKMIELHNQEYSQGKHSFTMAMNTFGDMTSEEFRQVMNGFQNRKPRKGKVFQEPLFYEAPRSVDWREKGYVTPVKNQGQCGSCWAFSATGALEGQMFRKTGKLVSLSEQNLVDCSGPQGNEGCNGGLMDYAFQYVADNGGLDSEESYPYEATEESCKYNPEYSVANDTGFVDIPKQEKALMKAVATVGPISVAIDAGHESFMFYKEGIYFEPDCSSEDMDHGVLVVGYGFESTESDNSKYWLVKNSWGEEWGMGGYIKMAKDRRNHCGIASAASYPTV</sequence>
<name>CATL1_CHLAE</name>
<reference key="1">
    <citation type="submission" date="1999-11" db="EMBL/GenBank/DDBJ databases">
        <title>Molecular cloning of a cDNA encoding a nuclear localizing cathepsin L-like cysteine protease, SPase.</title>
        <authorList>
            <person name="Nishinaka T."/>
            <person name="Huynh T."/>
            <person name="Cheng C.-H."/>
            <person name="Chiu R."/>
        </authorList>
    </citation>
    <scope>NUCLEOTIDE SEQUENCE [MRNA]</scope>
    <source>
        <tissue>Kidney</tissue>
    </source>
</reference>
<evidence type="ECO:0000250" key="1"/>
<evidence type="ECO:0000250" key="2">
    <source>
        <dbReference type="UniProtKB" id="P06797"/>
    </source>
</evidence>
<evidence type="ECO:0000250" key="3">
    <source>
        <dbReference type="UniProtKB" id="P07154"/>
    </source>
</evidence>
<evidence type="ECO:0000250" key="4">
    <source>
        <dbReference type="UniProtKB" id="P07711"/>
    </source>
</evidence>
<evidence type="ECO:0000250" key="5">
    <source>
        <dbReference type="UniProtKB" id="P25975"/>
    </source>
</evidence>
<evidence type="ECO:0000255" key="6">
    <source>
        <dbReference type="PROSITE-ProRule" id="PRU10088"/>
    </source>
</evidence>
<evidence type="ECO:0000255" key="7">
    <source>
        <dbReference type="PROSITE-ProRule" id="PRU10089"/>
    </source>
</evidence>
<evidence type="ECO:0000255" key="8">
    <source>
        <dbReference type="PROSITE-ProRule" id="PRU10090"/>
    </source>
</evidence>
<protein>
    <recommendedName>
        <fullName>Procathepsin L</fullName>
        <ecNumber>3.4.22.15</ecNumber>
    </recommendedName>
    <alternativeName>
        <fullName>Cathepsin L1</fullName>
    </alternativeName>
    <alternativeName>
        <fullName>Major excreted protein</fullName>
        <shortName>MEP</shortName>
    </alternativeName>
    <component>
        <recommendedName>
            <fullName>Cathepsin L</fullName>
        </recommendedName>
    </component>
    <component>
        <recommendedName>
            <fullName>Cathepsin L heavy chain</fullName>
        </recommendedName>
    </component>
    <component>
        <recommendedName>
            <fullName>Cathepsin L light chain</fullName>
        </recommendedName>
    </component>
</protein>
<feature type="signal peptide" evidence="3">
    <location>
        <begin position="1"/>
        <end position="17"/>
    </location>
</feature>
<feature type="propeptide" id="PRO_0000287866" description="Activation peptide" evidence="1">
    <location>
        <begin position="18"/>
        <end position="113"/>
    </location>
</feature>
<feature type="chain" id="PRO_0000450786" description="Cathepsin L" evidence="4">
    <location>
        <begin position="114"/>
        <end position="333"/>
    </location>
</feature>
<feature type="chain" id="PRO_0000287867" description="Cathepsin L heavy chain">
    <location>
        <begin position="114"/>
        <end position="288"/>
    </location>
</feature>
<feature type="propeptide" id="PRO_0000287868" evidence="1">
    <location>
        <begin position="289"/>
        <end position="291"/>
    </location>
</feature>
<feature type="chain" id="PRO_0000287869" description="Cathepsin L light chain">
    <location>
        <begin position="292"/>
        <end position="333"/>
    </location>
</feature>
<feature type="active site" evidence="4">
    <location>
        <position position="138"/>
    </location>
</feature>
<feature type="active site" evidence="4">
    <location>
        <position position="276"/>
    </location>
</feature>
<feature type="active site" evidence="4">
    <location>
        <position position="300"/>
    </location>
</feature>
<feature type="binding site" evidence="4">
    <location>
        <position position="122"/>
    </location>
    <ligand>
        <name>Zn(2+)</name>
        <dbReference type="ChEBI" id="CHEBI:29105"/>
        <label>1</label>
    </ligand>
</feature>
<feature type="binding site" evidence="4">
    <location>
        <position position="163"/>
    </location>
    <ligand>
        <name>Zn(2+)</name>
        <dbReference type="ChEBI" id="CHEBI:29105"/>
        <label>2</label>
    </ligand>
</feature>
<feature type="binding site" evidence="4">
    <location>
        <position position="184"/>
    </location>
    <ligand>
        <name>Zn(2+)</name>
        <dbReference type="ChEBI" id="CHEBI:29105"/>
        <label>3</label>
    </ligand>
</feature>
<feature type="binding site" evidence="4">
    <location>
        <position position="199"/>
    </location>
    <ligand>
        <name>Zn(2+)</name>
        <dbReference type="ChEBI" id="CHEBI:29105"/>
        <label>2</label>
    </ligand>
</feature>
<feature type="binding site" evidence="4">
    <location>
        <position position="205"/>
    </location>
    <ligand>
        <name>Zn(2+)</name>
        <dbReference type="ChEBI" id="CHEBI:29105"/>
        <label>4</label>
    </ligand>
</feature>
<feature type="binding site" evidence="4">
    <location>
        <position position="209"/>
    </location>
    <ligand>
        <name>Zn(2+)</name>
        <dbReference type="ChEBI" id="CHEBI:29105"/>
        <label>4</label>
    </ligand>
</feature>
<feature type="binding site" evidence="4">
    <location>
        <position position="227"/>
    </location>
    <ligand>
        <name>Zn(2+)</name>
        <dbReference type="ChEBI" id="CHEBI:29105"/>
        <label>3</label>
    </ligand>
</feature>
<feature type="binding site" evidence="4">
    <location>
        <position position="250"/>
    </location>
    <ligand>
        <name>Zn(2+)</name>
        <dbReference type="ChEBI" id="CHEBI:29105"/>
        <label>5</label>
    </ligand>
</feature>
<feature type="binding site" evidence="4">
    <location>
        <position position="253"/>
    </location>
    <ligand>
        <name>Zn(2+)</name>
        <dbReference type="ChEBI" id="CHEBI:29105"/>
        <label>5</label>
    </ligand>
</feature>
<feature type="binding site" evidence="4">
    <location>
        <position position="273"/>
    </location>
    <ligand>
        <name>Zn(2+)</name>
        <dbReference type="ChEBI" id="CHEBI:29105"/>
        <label>6</label>
    </ligand>
</feature>
<feature type="binding site" evidence="4">
    <location>
        <position position="275"/>
    </location>
    <ligand>
        <name>Zn(2+)</name>
        <dbReference type="ChEBI" id="CHEBI:29105"/>
        <label>7</label>
    </ligand>
</feature>
<feature type="site" description="Cleavage; by autolysis" evidence="4">
    <location>
        <begin position="106"/>
        <end position="107"/>
    </location>
</feature>
<feature type="site" description="Cleavage; by autolysis" evidence="4">
    <location>
        <begin position="107"/>
        <end position="108"/>
    </location>
</feature>
<feature type="site" description="Cleavage; by autolysis" evidence="4">
    <location>
        <begin position="112"/>
        <end position="113"/>
    </location>
</feature>
<feature type="site" description="Cleavage; by autolysis" evidence="4">
    <location>
        <begin position="113"/>
        <end position="114"/>
    </location>
</feature>
<feature type="disulfide bond" evidence="4">
    <location>
        <begin position="135"/>
        <end position="178"/>
    </location>
</feature>
<feature type="disulfide bond" evidence="4">
    <location>
        <begin position="169"/>
        <end position="211"/>
    </location>
</feature>
<feature type="disulfide bond" description="Interchain (between heavy and light chains)" evidence="4">
    <location>
        <begin position="269"/>
        <end position="322"/>
    </location>
</feature>
<gene>
    <name type="primary">CTSL</name>
    <name type="synonym">CTSL1</name>
</gene>